<reference key="1">
    <citation type="journal article" date="2011" name="J. Bacteriol.">
        <title>Genome sequence of the verrucomicrobium Opitutus terrae PB90-1, an abundant inhabitant of rice paddy soil ecosystems.</title>
        <authorList>
            <person name="van Passel M.W."/>
            <person name="Kant R."/>
            <person name="Palva A."/>
            <person name="Copeland A."/>
            <person name="Lucas S."/>
            <person name="Lapidus A."/>
            <person name="Glavina del Rio T."/>
            <person name="Pitluck S."/>
            <person name="Goltsman E."/>
            <person name="Clum A."/>
            <person name="Sun H."/>
            <person name="Schmutz J."/>
            <person name="Larimer F.W."/>
            <person name="Land M.L."/>
            <person name="Hauser L."/>
            <person name="Kyrpides N."/>
            <person name="Mikhailova N."/>
            <person name="Richardson P.P."/>
            <person name="Janssen P.H."/>
            <person name="de Vos W.M."/>
            <person name="Smidt H."/>
        </authorList>
    </citation>
    <scope>NUCLEOTIDE SEQUENCE [LARGE SCALE GENOMIC DNA]</scope>
    <source>
        <strain>DSM 11246 / JCM 15787 / PB90-1</strain>
    </source>
</reference>
<evidence type="ECO:0000255" key="1">
    <source>
        <dbReference type="HAMAP-Rule" id="MF_00445"/>
    </source>
</evidence>
<accession>B1ZRS0</accession>
<gene>
    <name evidence="1" type="primary">nuoN1</name>
    <name type="ordered locus">Oter_0473</name>
</gene>
<organism>
    <name type="scientific">Opitutus terrae (strain DSM 11246 / JCM 15787 / PB90-1)</name>
    <dbReference type="NCBI Taxonomy" id="452637"/>
    <lineage>
        <taxon>Bacteria</taxon>
        <taxon>Pseudomonadati</taxon>
        <taxon>Verrucomicrobiota</taxon>
        <taxon>Opitutia</taxon>
        <taxon>Opitutales</taxon>
        <taxon>Opitutaceae</taxon>
        <taxon>Opitutus</taxon>
    </lineage>
</organism>
<keyword id="KW-0997">Cell inner membrane</keyword>
<keyword id="KW-1003">Cell membrane</keyword>
<keyword id="KW-0472">Membrane</keyword>
<keyword id="KW-0520">NAD</keyword>
<keyword id="KW-0874">Quinone</keyword>
<keyword id="KW-1185">Reference proteome</keyword>
<keyword id="KW-1278">Translocase</keyword>
<keyword id="KW-0812">Transmembrane</keyword>
<keyword id="KW-1133">Transmembrane helix</keyword>
<keyword id="KW-0813">Transport</keyword>
<keyword id="KW-0830">Ubiquinone</keyword>
<sequence length="505" mass="53767">MNLEAVKHAASLNEWSGLIPEIALGCLALLLLVVEMVLPKKRHDLIATIAIIGQFGILGWVAWDFHSPFLGRNDAFSGLLQFSYVGQAMRVFFLLSSIFVSILARVSLAKQQLPRIEFYHIVLVATAAMMLLAQANHFVLFFVALETLTVGLYILVSYFRTSPLSLEAGLKYLIMGALSSSLLLFGIVLLYGVAGNPALEGHTADPMNFAALTRFLALNPDNFLAAAGIVLVLSGIAFKIGAFPFQIWIPDVYQGAPTPTTAFLAVSSKAAGFAILLVLVNSVFGPYWWLVQPVLVAMAVATILFGNIAALTQHNVKRLIGLSGVSHAGFLLIGIIASHSVPSAVGAVLFYLFAYLLATFAVFGVMAHLAGADDAEQELDHYAGLAKEDPFLAAILAVALGSLAGIPPLAGFMGKLFVFIAAFKAGFYGLLAVAIVGVVISIYYYFGWIKAAFFETWTPPADAVNPRPARTPVGAAAGVALATLALCSILFGVYQGPLGAWLLAR</sequence>
<name>NUON1_OPITP</name>
<protein>
    <recommendedName>
        <fullName evidence="1">NADH-quinone oxidoreductase subunit N 1</fullName>
        <ecNumber evidence="1">7.1.1.-</ecNumber>
    </recommendedName>
    <alternativeName>
        <fullName evidence="1">NADH dehydrogenase I subunit N 1</fullName>
    </alternativeName>
    <alternativeName>
        <fullName evidence="1">NDH-1 subunit N 1</fullName>
    </alternativeName>
</protein>
<comment type="function">
    <text evidence="1">NDH-1 shuttles electrons from NADH, via FMN and iron-sulfur (Fe-S) centers, to quinones in the respiratory chain. The immediate electron acceptor for the enzyme in this species is believed to be ubiquinone. Couples the redox reaction to proton translocation (for every two electrons transferred, four hydrogen ions are translocated across the cytoplasmic membrane), and thus conserves the redox energy in a proton gradient.</text>
</comment>
<comment type="catalytic activity">
    <reaction evidence="1">
        <text>a quinone + NADH + 5 H(+)(in) = a quinol + NAD(+) + 4 H(+)(out)</text>
        <dbReference type="Rhea" id="RHEA:57888"/>
        <dbReference type="ChEBI" id="CHEBI:15378"/>
        <dbReference type="ChEBI" id="CHEBI:24646"/>
        <dbReference type="ChEBI" id="CHEBI:57540"/>
        <dbReference type="ChEBI" id="CHEBI:57945"/>
        <dbReference type="ChEBI" id="CHEBI:132124"/>
    </reaction>
</comment>
<comment type="subunit">
    <text evidence="1">NDH-1 is composed of 14 different subunits. Subunits NuoA, H, J, K, L, M, N constitute the membrane sector of the complex.</text>
</comment>
<comment type="subcellular location">
    <subcellularLocation>
        <location evidence="1">Cell inner membrane</location>
        <topology evidence="1">Multi-pass membrane protein</topology>
    </subcellularLocation>
</comment>
<comment type="similarity">
    <text evidence="1">Belongs to the complex I subunit 2 family.</text>
</comment>
<dbReference type="EC" id="7.1.1.-" evidence="1"/>
<dbReference type="EMBL" id="CP001032">
    <property type="protein sequence ID" value="ACB73763.1"/>
    <property type="molecule type" value="Genomic_DNA"/>
</dbReference>
<dbReference type="RefSeq" id="WP_012373301.1">
    <property type="nucleotide sequence ID" value="NC_010571.1"/>
</dbReference>
<dbReference type="SMR" id="B1ZRS0"/>
<dbReference type="STRING" id="452637.Oter_0473"/>
<dbReference type="KEGG" id="ote:Oter_0473"/>
<dbReference type="eggNOG" id="COG1007">
    <property type="taxonomic scope" value="Bacteria"/>
</dbReference>
<dbReference type="HOGENOM" id="CLU_007100_1_3_0"/>
<dbReference type="OrthoDB" id="9807568at2"/>
<dbReference type="Proteomes" id="UP000007013">
    <property type="component" value="Chromosome"/>
</dbReference>
<dbReference type="GO" id="GO:0005886">
    <property type="term" value="C:plasma membrane"/>
    <property type="evidence" value="ECO:0007669"/>
    <property type="project" value="UniProtKB-SubCell"/>
</dbReference>
<dbReference type="GO" id="GO:0008137">
    <property type="term" value="F:NADH dehydrogenase (ubiquinone) activity"/>
    <property type="evidence" value="ECO:0007669"/>
    <property type="project" value="InterPro"/>
</dbReference>
<dbReference type="GO" id="GO:0050136">
    <property type="term" value="F:NADH:ubiquinone reductase (non-electrogenic) activity"/>
    <property type="evidence" value="ECO:0007669"/>
    <property type="project" value="UniProtKB-UniRule"/>
</dbReference>
<dbReference type="GO" id="GO:0048038">
    <property type="term" value="F:quinone binding"/>
    <property type="evidence" value="ECO:0007669"/>
    <property type="project" value="UniProtKB-KW"/>
</dbReference>
<dbReference type="GO" id="GO:0042773">
    <property type="term" value="P:ATP synthesis coupled electron transport"/>
    <property type="evidence" value="ECO:0007669"/>
    <property type="project" value="InterPro"/>
</dbReference>
<dbReference type="HAMAP" id="MF_00445">
    <property type="entry name" value="NDH1_NuoN_1"/>
    <property type="match status" value="1"/>
</dbReference>
<dbReference type="InterPro" id="IPR010096">
    <property type="entry name" value="NADH-Q_OxRdtase_suN/2"/>
</dbReference>
<dbReference type="InterPro" id="IPR001750">
    <property type="entry name" value="ND/Mrp_TM"/>
</dbReference>
<dbReference type="NCBIfam" id="TIGR01770">
    <property type="entry name" value="NDH_I_N"/>
    <property type="match status" value="1"/>
</dbReference>
<dbReference type="PANTHER" id="PTHR22773">
    <property type="entry name" value="NADH DEHYDROGENASE"/>
    <property type="match status" value="1"/>
</dbReference>
<dbReference type="Pfam" id="PF00361">
    <property type="entry name" value="Proton_antipo_M"/>
    <property type="match status" value="1"/>
</dbReference>
<feature type="chain" id="PRO_0000391193" description="NADH-quinone oxidoreductase subunit N 1">
    <location>
        <begin position="1"/>
        <end position="505"/>
    </location>
</feature>
<feature type="transmembrane region" description="Helical" evidence="1">
    <location>
        <begin position="18"/>
        <end position="38"/>
    </location>
</feature>
<feature type="transmembrane region" description="Helical" evidence="1">
    <location>
        <begin position="45"/>
        <end position="65"/>
    </location>
</feature>
<feature type="transmembrane region" description="Helical" evidence="1">
    <location>
        <begin position="84"/>
        <end position="104"/>
    </location>
</feature>
<feature type="transmembrane region" description="Helical" evidence="1">
    <location>
        <begin position="116"/>
        <end position="136"/>
    </location>
</feature>
<feature type="transmembrane region" description="Helical" evidence="1">
    <location>
        <begin position="138"/>
        <end position="158"/>
    </location>
</feature>
<feature type="transmembrane region" description="Helical" evidence="1">
    <location>
        <begin position="173"/>
        <end position="193"/>
    </location>
</feature>
<feature type="transmembrane region" description="Helical" evidence="1">
    <location>
        <begin position="223"/>
        <end position="243"/>
    </location>
</feature>
<feature type="transmembrane region" description="Helical" evidence="1">
    <location>
        <begin position="271"/>
        <end position="291"/>
    </location>
</feature>
<feature type="transmembrane region" description="Helical" evidence="1">
    <location>
        <begin position="292"/>
        <end position="312"/>
    </location>
</feature>
<feature type="transmembrane region" description="Helical" evidence="1">
    <location>
        <begin position="319"/>
        <end position="339"/>
    </location>
</feature>
<feature type="transmembrane region" description="Helical" evidence="1">
    <location>
        <begin position="345"/>
        <end position="365"/>
    </location>
</feature>
<feature type="transmembrane region" description="Helical" evidence="1">
    <location>
        <begin position="391"/>
        <end position="411"/>
    </location>
</feature>
<feature type="transmembrane region" description="Helical" evidence="1">
    <location>
        <begin position="429"/>
        <end position="449"/>
    </location>
</feature>
<feature type="transmembrane region" description="Helical" evidence="1">
    <location>
        <begin position="473"/>
        <end position="493"/>
    </location>
</feature>
<proteinExistence type="inferred from homology"/>